<reference key="1">
    <citation type="journal article" date="2007" name="J. Bacteriol.">
        <title>Genome-wide transcriptional changes in Streptococcus gordonii in response to competence signaling peptide.</title>
        <authorList>
            <person name="Vickerman M.M."/>
            <person name="Iobst S."/>
            <person name="Jesionowski A.M."/>
            <person name="Gill S.R."/>
        </authorList>
    </citation>
    <scope>NUCLEOTIDE SEQUENCE [LARGE SCALE GENOMIC DNA]</scope>
    <source>
        <strain>Challis / ATCC 35105 / BCRC 15272 / CH1 / DL1 / V288</strain>
    </source>
</reference>
<feature type="chain" id="PRO_1000082758" description="Putative pre-16S rRNA nuclease">
    <location>
        <begin position="1"/>
        <end position="139"/>
    </location>
</feature>
<proteinExistence type="inferred from homology"/>
<protein>
    <recommendedName>
        <fullName evidence="1">Putative pre-16S rRNA nuclease</fullName>
        <ecNumber evidence="1">3.1.-.-</ecNumber>
    </recommendedName>
</protein>
<dbReference type="EC" id="3.1.-.-" evidence="1"/>
<dbReference type="EMBL" id="CP000725">
    <property type="protein sequence ID" value="ABV10938.1"/>
    <property type="molecule type" value="Genomic_DNA"/>
</dbReference>
<dbReference type="SMR" id="A8AZS9"/>
<dbReference type="STRING" id="467705.SGO_2041"/>
<dbReference type="KEGG" id="sgo:SGO_2041"/>
<dbReference type="eggNOG" id="COG0816">
    <property type="taxonomic scope" value="Bacteria"/>
</dbReference>
<dbReference type="HOGENOM" id="CLU_098240_2_0_9"/>
<dbReference type="Proteomes" id="UP000001131">
    <property type="component" value="Chromosome"/>
</dbReference>
<dbReference type="GO" id="GO:0005829">
    <property type="term" value="C:cytosol"/>
    <property type="evidence" value="ECO:0007669"/>
    <property type="project" value="TreeGrafter"/>
</dbReference>
<dbReference type="GO" id="GO:0004518">
    <property type="term" value="F:nuclease activity"/>
    <property type="evidence" value="ECO:0007669"/>
    <property type="project" value="UniProtKB-KW"/>
</dbReference>
<dbReference type="GO" id="GO:0000967">
    <property type="term" value="P:rRNA 5'-end processing"/>
    <property type="evidence" value="ECO:0007669"/>
    <property type="project" value="UniProtKB-UniRule"/>
</dbReference>
<dbReference type="CDD" id="cd16964">
    <property type="entry name" value="YqgF"/>
    <property type="match status" value="1"/>
</dbReference>
<dbReference type="FunFam" id="3.30.420.140:FF:000003">
    <property type="entry name" value="Putative pre-16S rRNA nuclease"/>
    <property type="match status" value="1"/>
</dbReference>
<dbReference type="Gene3D" id="3.30.420.140">
    <property type="entry name" value="YqgF/RNase H-like domain"/>
    <property type="match status" value="1"/>
</dbReference>
<dbReference type="HAMAP" id="MF_00651">
    <property type="entry name" value="Nuclease_YqgF"/>
    <property type="match status" value="1"/>
</dbReference>
<dbReference type="InterPro" id="IPR012337">
    <property type="entry name" value="RNaseH-like_sf"/>
</dbReference>
<dbReference type="InterPro" id="IPR005227">
    <property type="entry name" value="YqgF"/>
</dbReference>
<dbReference type="InterPro" id="IPR006641">
    <property type="entry name" value="YqgF/RNaseH-like_dom"/>
</dbReference>
<dbReference type="InterPro" id="IPR037027">
    <property type="entry name" value="YqgF/RNaseH-like_dom_sf"/>
</dbReference>
<dbReference type="NCBIfam" id="TIGR00250">
    <property type="entry name" value="RNAse_H_YqgF"/>
    <property type="match status" value="1"/>
</dbReference>
<dbReference type="PANTHER" id="PTHR33317">
    <property type="entry name" value="POLYNUCLEOTIDYL TRANSFERASE, RIBONUCLEASE H-LIKE SUPERFAMILY PROTEIN"/>
    <property type="match status" value="1"/>
</dbReference>
<dbReference type="PANTHER" id="PTHR33317:SF4">
    <property type="entry name" value="POLYNUCLEOTIDYL TRANSFERASE, RIBONUCLEASE H-LIKE SUPERFAMILY PROTEIN"/>
    <property type="match status" value="1"/>
</dbReference>
<dbReference type="Pfam" id="PF03652">
    <property type="entry name" value="RuvX"/>
    <property type="match status" value="1"/>
</dbReference>
<dbReference type="SMART" id="SM00732">
    <property type="entry name" value="YqgFc"/>
    <property type="match status" value="1"/>
</dbReference>
<dbReference type="SUPFAM" id="SSF53098">
    <property type="entry name" value="Ribonuclease H-like"/>
    <property type="match status" value="1"/>
</dbReference>
<name>YQGF_STRGC</name>
<gene>
    <name type="ordered locus">SGO_2041</name>
</gene>
<sequence length="139" mass="15553">MRIMGLDVGSKTVGVAISDPLGFTAQGLEIIQINEDQEEFGFERLGELVAEYKVDKFVIGLPKNMNNTSGPRVEASQAYGAKVTELFGLPVEYQDERLTTVAAERMLIEQADVSRNKRKKVIDKLAAQLILQNYLDRNY</sequence>
<comment type="function">
    <text evidence="1">Could be a nuclease involved in processing of the 5'-end of pre-16S rRNA.</text>
</comment>
<comment type="subcellular location">
    <subcellularLocation>
        <location evidence="1">Cytoplasm</location>
    </subcellularLocation>
</comment>
<comment type="similarity">
    <text evidence="1">Belongs to the YqgF nuclease family.</text>
</comment>
<organism>
    <name type="scientific">Streptococcus gordonii (strain Challis / ATCC 35105 / BCRC 15272 / CH1 / DL1 / V288)</name>
    <dbReference type="NCBI Taxonomy" id="467705"/>
    <lineage>
        <taxon>Bacteria</taxon>
        <taxon>Bacillati</taxon>
        <taxon>Bacillota</taxon>
        <taxon>Bacilli</taxon>
        <taxon>Lactobacillales</taxon>
        <taxon>Streptococcaceae</taxon>
        <taxon>Streptococcus</taxon>
    </lineage>
</organism>
<evidence type="ECO:0000255" key="1">
    <source>
        <dbReference type="HAMAP-Rule" id="MF_00651"/>
    </source>
</evidence>
<keyword id="KW-0963">Cytoplasm</keyword>
<keyword id="KW-0378">Hydrolase</keyword>
<keyword id="KW-0540">Nuclease</keyword>
<keyword id="KW-1185">Reference proteome</keyword>
<keyword id="KW-0690">Ribosome biogenesis</keyword>
<accession>A8AZS9</accession>